<comment type="function">
    <text evidence="1">Catalyzes the incorporation of amino acid(s) into the interchain peptide bridge of peptidoglycan, using aminoacyl-tRNA as amino acid donor.</text>
</comment>
<comment type="catalytic activity">
    <reaction>
        <text>beta-D-GlcNAc-(1-&gt;4)-Mur2Ac(oyl-L-Ala-D-isoglutaminyl-L-Lys-D-Ala-D-Ala)-di-trans,octa-cis-undecaprenyl diphosphate + glycyl-tRNA(Gly) = beta-D-GlcNAc-(1-&gt;4)-Mur2Ac(oyl-L-Ala-D-isoglutaminyl-L-Lys-(N(6)-Gly)-D-Ala-D-Ala)-di-trans,octa-cis-undecaprenyl diphosphate + tRNA(Gly) + H(+)</text>
        <dbReference type="Rhea" id="RHEA:30435"/>
        <dbReference type="Rhea" id="RHEA-COMP:9664"/>
        <dbReference type="Rhea" id="RHEA-COMP:9683"/>
        <dbReference type="ChEBI" id="CHEBI:15378"/>
        <dbReference type="ChEBI" id="CHEBI:62233"/>
        <dbReference type="ChEBI" id="CHEBI:62234"/>
        <dbReference type="ChEBI" id="CHEBI:78442"/>
        <dbReference type="ChEBI" id="CHEBI:78522"/>
        <dbReference type="EC" id="2.3.2.16"/>
    </reaction>
</comment>
<comment type="subcellular location">
    <subcellularLocation>
        <location evidence="2">Cytoplasm</location>
    </subcellularLocation>
</comment>
<comment type="similarity">
    <text evidence="2">Belongs to the FemABX family.</text>
</comment>
<proteinExistence type="inferred from homology"/>
<protein>
    <recommendedName>
        <fullName>Lipid II:glycine glycyltransferase</fullName>
        <ecNumber>2.3.2.16</ecNumber>
    </recommendedName>
    <alternativeName>
        <fullName>Factor essential for expression of methicillin resistance X</fullName>
    </alternativeName>
</protein>
<feature type="chain" id="PRO_0000236178" description="Lipid II:glycine glycyltransferase">
    <location>
        <begin position="1"/>
        <end position="419"/>
    </location>
</feature>
<organism>
    <name type="scientific">Staphylococcus haemolyticus (strain JCSC1435)</name>
    <dbReference type="NCBI Taxonomy" id="279808"/>
    <lineage>
        <taxon>Bacteria</taxon>
        <taxon>Bacillati</taxon>
        <taxon>Bacillota</taxon>
        <taxon>Bacilli</taxon>
        <taxon>Bacillales</taxon>
        <taxon>Staphylococcaceae</taxon>
        <taxon>Staphylococcus</taxon>
    </lineage>
</organism>
<gene>
    <name type="primary">femX</name>
    <name type="synonym">fmhB</name>
    <name type="synonym">fmtB</name>
    <name type="ordered locus">SH0790</name>
</gene>
<accession>Q4L8C6</accession>
<name>FEMX_STAHJ</name>
<keyword id="KW-0012">Acyltransferase</keyword>
<keyword id="KW-0133">Cell shape</keyword>
<keyword id="KW-0961">Cell wall biogenesis/degradation</keyword>
<keyword id="KW-0963">Cytoplasm</keyword>
<keyword id="KW-0573">Peptidoglycan synthesis</keyword>
<keyword id="KW-0808">Transferase</keyword>
<sequence>MEKMNITNQEHDAFVKAHPNGDLLQLTKWAETKRLTGWYSKRVAVGEDGEIKGVGQLLFKKIPKLPFTLCYVSRGFVTDYSDKAALEQLLEETKKVAKAEKAYAIKIDPDVEVDKGIDALKNLNALGFKHKGFKEGLSKDYIQPRMTMITPIDKSDEEIFQSFERRNRSKVRLSLKRGTKVERSNREGLKNFAELMKITGERDGFLTRDLSYFQNIYDSLHEDGDAELFLVKLEPKPVLDDIDNELKELESEKTQLQNKYERKQVKKTKNKLNDVEAKIQKSIERKDDMTDLLAKHPNGIYLSGALLMFAGSKSYYLYGASSNDYRDFLPNHHMQYEMMKFAREHGAKTYDFGGTDNNPDKDSEHYGLWAFKRVWGTYLSEKIGEFDYVLNQPLYQLIEQVKPRLTKAKIKISRKLKGK</sequence>
<evidence type="ECO:0000250" key="1"/>
<evidence type="ECO:0000305" key="2"/>
<reference key="1">
    <citation type="journal article" date="2005" name="J. Bacteriol.">
        <title>Whole-genome sequencing of Staphylococcus haemolyticus uncovers the extreme plasticity of its genome and the evolution of human-colonizing staphylococcal species.</title>
        <authorList>
            <person name="Takeuchi F."/>
            <person name="Watanabe S."/>
            <person name="Baba T."/>
            <person name="Yuzawa H."/>
            <person name="Ito T."/>
            <person name="Morimoto Y."/>
            <person name="Kuroda M."/>
            <person name="Cui L."/>
            <person name="Takahashi M."/>
            <person name="Ankai A."/>
            <person name="Baba S."/>
            <person name="Fukui S."/>
            <person name="Lee J.C."/>
            <person name="Hiramatsu K."/>
        </authorList>
    </citation>
    <scope>NUCLEOTIDE SEQUENCE [LARGE SCALE GENOMIC DNA]</scope>
    <source>
        <strain>JCSC1435</strain>
    </source>
</reference>
<dbReference type="EC" id="2.3.2.16"/>
<dbReference type="EMBL" id="AP006716">
    <property type="protein sequence ID" value="BAE04099.1"/>
    <property type="molecule type" value="Genomic_DNA"/>
</dbReference>
<dbReference type="RefSeq" id="WP_011275113.1">
    <property type="nucleotide sequence ID" value="NC_007168.1"/>
</dbReference>
<dbReference type="SMR" id="Q4L8C6"/>
<dbReference type="KEGG" id="sha:SH0790"/>
<dbReference type="eggNOG" id="COG2348">
    <property type="taxonomic scope" value="Bacteria"/>
</dbReference>
<dbReference type="HOGENOM" id="CLU_048411_0_1_9"/>
<dbReference type="OrthoDB" id="9785911at2"/>
<dbReference type="Proteomes" id="UP000000543">
    <property type="component" value="Chromosome"/>
</dbReference>
<dbReference type="GO" id="GO:0005737">
    <property type="term" value="C:cytoplasm"/>
    <property type="evidence" value="ECO:0007669"/>
    <property type="project" value="UniProtKB-SubCell"/>
</dbReference>
<dbReference type="GO" id="GO:0016755">
    <property type="term" value="F:aminoacyltransferase activity"/>
    <property type="evidence" value="ECO:0007669"/>
    <property type="project" value="InterPro"/>
</dbReference>
<dbReference type="GO" id="GO:0071555">
    <property type="term" value="P:cell wall organization"/>
    <property type="evidence" value="ECO:0007669"/>
    <property type="project" value="UniProtKB-KW"/>
</dbReference>
<dbReference type="GO" id="GO:0009252">
    <property type="term" value="P:peptidoglycan biosynthetic process"/>
    <property type="evidence" value="ECO:0007669"/>
    <property type="project" value="UniProtKB-KW"/>
</dbReference>
<dbReference type="GO" id="GO:0008360">
    <property type="term" value="P:regulation of cell shape"/>
    <property type="evidence" value="ECO:0007669"/>
    <property type="project" value="UniProtKB-KW"/>
</dbReference>
<dbReference type="Gene3D" id="1.20.58.90">
    <property type="match status" value="1"/>
</dbReference>
<dbReference type="Gene3D" id="3.40.630.30">
    <property type="match status" value="2"/>
</dbReference>
<dbReference type="InterPro" id="IPR016181">
    <property type="entry name" value="Acyl_CoA_acyltransferase"/>
</dbReference>
<dbReference type="InterPro" id="IPR003447">
    <property type="entry name" value="FEMABX"/>
</dbReference>
<dbReference type="InterPro" id="IPR050644">
    <property type="entry name" value="PG_Glycine_Bridge_Synth"/>
</dbReference>
<dbReference type="PANTHER" id="PTHR36174">
    <property type="entry name" value="LIPID II:GLYCINE GLYCYLTRANSFERASE"/>
    <property type="match status" value="1"/>
</dbReference>
<dbReference type="PANTHER" id="PTHR36174:SF1">
    <property type="entry name" value="LIPID II:GLYCINE GLYCYLTRANSFERASE"/>
    <property type="match status" value="1"/>
</dbReference>
<dbReference type="Pfam" id="PF02388">
    <property type="entry name" value="FemAB"/>
    <property type="match status" value="1"/>
</dbReference>
<dbReference type="SUPFAM" id="SSF55729">
    <property type="entry name" value="Acyl-CoA N-acyltransferases (Nat)"/>
    <property type="match status" value="2"/>
</dbReference>
<dbReference type="PROSITE" id="PS51191">
    <property type="entry name" value="FEMABX"/>
    <property type="match status" value="1"/>
</dbReference>